<gene>
    <name evidence="1" type="primary">tsf</name>
    <name type="ordered locus">PMT_0583</name>
</gene>
<dbReference type="EMBL" id="BX548175">
    <property type="protein sequence ID" value="CAE20758.1"/>
    <property type="molecule type" value="Genomic_DNA"/>
</dbReference>
<dbReference type="RefSeq" id="WP_011129962.1">
    <property type="nucleotide sequence ID" value="NC_005071.1"/>
</dbReference>
<dbReference type="SMR" id="Q7TV13"/>
<dbReference type="KEGG" id="pmt:PMT_0583"/>
<dbReference type="eggNOG" id="COG0264">
    <property type="taxonomic scope" value="Bacteria"/>
</dbReference>
<dbReference type="HOGENOM" id="CLU_047155_1_1_3"/>
<dbReference type="OrthoDB" id="9808348at2"/>
<dbReference type="Proteomes" id="UP000001423">
    <property type="component" value="Chromosome"/>
</dbReference>
<dbReference type="GO" id="GO:0005737">
    <property type="term" value="C:cytoplasm"/>
    <property type="evidence" value="ECO:0007669"/>
    <property type="project" value="UniProtKB-SubCell"/>
</dbReference>
<dbReference type="GO" id="GO:0003746">
    <property type="term" value="F:translation elongation factor activity"/>
    <property type="evidence" value="ECO:0007669"/>
    <property type="project" value="UniProtKB-UniRule"/>
</dbReference>
<dbReference type="CDD" id="cd14275">
    <property type="entry name" value="UBA_EF-Ts"/>
    <property type="match status" value="1"/>
</dbReference>
<dbReference type="FunFam" id="1.10.286.20:FF:000001">
    <property type="entry name" value="Elongation factor Ts"/>
    <property type="match status" value="1"/>
</dbReference>
<dbReference type="FunFam" id="1.10.8.10:FF:000001">
    <property type="entry name" value="Elongation factor Ts"/>
    <property type="match status" value="1"/>
</dbReference>
<dbReference type="Gene3D" id="1.10.286.20">
    <property type="match status" value="1"/>
</dbReference>
<dbReference type="Gene3D" id="1.10.8.10">
    <property type="entry name" value="DNA helicase RuvA subunit, C-terminal domain"/>
    <property type="match status" value="1"/>
</dbReference>
<dbReference type="Gene3D" id="3.30.479.20">
    <property type="entry name" value="Elongation factor Ts, dimerisation domain"/>
    <property type="match status" value="1"/>
</dbReference>
<dbReference type="HAMAP" id="MF_00050">
    <property type="entry name" value="EF_Ts"/>
    <property type="match status" value="1"/>
</dbReference>
<dbReference type="InterPro" id="IPR036402">
    <property type="entry name" value="EF-Ts_dimer_sf"/>
</dbReference>
<dbReference type="InterPro" id="IPR001816">
    <property type="entry name" value="Transl_elong_EFTs/EF1B"/>
</dbReference>
<dbReference type="InterPro" id="IPR014039">
    <property type="entry name" value="Transl_elong_EFTs/EF1B_dimer"/>
</dbReference>
<dbReference type="InterPro" id="IPR018101">
    <property type="entry name" value="Transl_elong_Ts_CS"/>
</dbReference>
<dbReference type="InterPro" id="IPR009060">
    <property type="entry name" value="UBA-like_sf"/>
</dbReference>
<dbReference type="NCBIfam" id="TIGR00116">
    <property type="entry name" value="tsf"/>
    <property type="match status" value="1"/>
</dbReference>
<dbReference type="PANTHER" id="PTHR11741">
    <property type="entry name" value="ELONGATION FACTOR TS"/>
    <property type="match status" value="1"/>
</dbReference>
<dbReference type="PANTHER" id="PTHR11741:SF10">
    <property type="entry name" value="POLYPROTEIN OF EF-TS, CHLOROPLASTIC"/>
    <property type="match status" value="1"/>
</dbReference>
<dbReference type="Pfam" id="PF25025">
    <property type="entry name" value="EF-Ts_N"/>
    <property type="match status" value="1"/>
</dbReference>
<dbReference type="Pfam" id="PF00889">
    <property type="entry name" value="EF_TS"/>
    <property type="match status" value="1"/>
</dbReference>
<dbReference type="SUPFAM" id="SSF54713">
    <property type="entry name" value="Elongation factor Ts (EF-Ts), dimerisation domain"/>
    <property type="match status" value="1"/>
</dbReference>
<dbReference type="SUPFAM" id="SSF46934">
    <property type="entry name" value="UBA-like"/>
    <property type="match status" value="1"/>
</dbReference>
<dbReference type="PROSITE" id="PS01126">
    <property type="entry name" value="EF_TS_1"/>
    <property type="match status" value="1"/>
</dbReference>
<dbReference type="PROSITE" id="PS01127">
    <property type="entry name" value="EF_TS_2"/>
    <property type="match status" value="1"/>
</dbReference>
<comment type="function">
    <text evidence="1">Associates with the EF-Tu.GDP complex and induces the exchange of GDP to GTP. It remains bound to the aminoacyl-tRNA.EF-Tu.GTP complex up to the GTP hydrolysis stage on the ribosome.</text>
</comment>
<comment type="subcellular location">
    <subcellularLocation>
        <location evidence="1">Cytoplasm</location>
    </subcellularLocation>
</comment>
<comment type="similarity">
    <text evidence="1">Belongs to the EF-Ts family.</text>
</comment>
<evidence type="ECO:0000255" key="1">
    <source>
        <dbReference type="HAMAP-Rule" id="MF_00050"/>
    </source>
</evidence>
<feature type="chain" id="PRO_0000161174" description="Elongation factor Ts">
    <location>
        <begin position="1"/>
        <end position="218"/>
    </location>
</feature>
<feature type="region of interest" description="Involved in Mg(2+) ion dislocation from EF-Tu" evidence="1">
    <location>
        <begin position="82"/>
        <end position="85"/>
    </location>
</feature>
<name>EFTS_PROMM</name>
<protein>
    <recommendedName>
        <fullName evidence="1">Elongation factor Ts</fullName>
        <shortName evidence="1">EF-Ts</shortName>
    </recommendedName>
</protein>
<sequence>MADVSAKIVKDLRDKTGAGMMDCKKALAESDGDMVKASEWLRQKGIASAEKKSSRIAAEGAIGTYIHTGARVGVLLELNCETDFVARGDLFQGLLKDVAMQVAACPNVEYVSTEEIPVDVVEKEKSIEMGRDDLSGKPEQIKAKIVEGRIGKRLKELVLLEQPFIRDSSMTVAELVKQVAGKIGENIKVRRFTRYTLGEGIEVDQTDFATEVASMKTA</sequence>
<proteinExistence type="inferred from homology"/>
<organism>
    <name type="scientific">Prochlorococcus marinus (strain MIT 9313)</name>
    <dbReference type="NCBI Taxonomy" id="74547"/>
    <lineage>
        <taxon>Bacteria</taxon>
        <taxon>Bacillati</taxon>
        <taxon>Cyanobacteriota</taxon>
        <taxon>Cyanophyceae</taxon>
        <taxon>Synechococcales</taxon>
        <taxon>Prochlorococcaceae</taxon>
        <taxon>Prochlorococcus</taxon>
    </lineage>
</organism>
<reference key="1">
    <citation type="journal article" date="2003" name="Nature">
        <title>Genome divergence in two Prochlorococcus ecotypes reflects oceanic niche differentiation.</title>
        <authorList>
            <person name="Rocap G."/>
            <person name="Larimer F.W."/>
            <person name="Lamerdin J.E."/>
            <person name="Malfatti S."/>
            <person name="Chain P."/>
            <person name="Ahlgren N.A."/>
            <person name="Arellano A."/>
            <person name="Coleman M."/>
            <person name="Hauser L."/>
            <person name="Hess W.R."/>
            <person name="Johnson Z.I."/>
            <person name="Land M.L."/>
            <person name="Lindell D."/>
            <person name="Post A.F."/>
            <person name="Regala W."/>
            <person name="Shah M."/>
            <person name="Shaw S.L."/>
            <person name="Steglich C."/>
            <person name="Sullivan M.B."/>
            <person name="Ting C.S."/>
            <person name="Tolonen A."/>
            <person name="Webb E.A."/>
            <person name="Zinser E.R."/>
            <person name="Chisholm S.W."/>
        </authorList>
    </citation>
    <scope>NUCLEOTIDE SEQUENCE [LARGE SCALE GENOMIC DNA]</scope>
    <source>
        <strain>MIT 9313</strain>
    </source>
</reference>
<accession>Q7TV13</accession>
<keyword id="KW-0963">Cytoplasm</keyword>
<keyword id="KW-0251">Elongation factor</keyword>
<keyword id="KW-0648">Protein biosynthesis</keyword>
<keyword id="KW-1185">Reference proteome</keyword>